<organism>
    <name type="scientific">Hyphomonas neptunium (strain ATCC 15444)</name>
    <dbReference type="NCBI Taxonomy" id="228405"/>
    <lineage>
        <taxon>Bacteria</taxon>
        <taxon>Pseudomonadati</taxon>
        <taxon>Pseudomonadota</taxon>
        <taxon>Alphaproteobacteria</taxon>
        <taxon>Hyphomonadales</taxon>
        <taxon>Hyphomonadaceae</taxon>
        <taxon>Hyphomonas</taxon>
    </lineage>
</organism>
<protein>
    <recommendedName>
        <fullName evidence="1">GTPase Der</fullName>
    </recommendedName>
    <alternativeName>
        <fullName evidence="1">GTP-binding protein EngA</fullName>
    </alternativeName>
</protein>
<reference key="1">
    <citation type="journal article" date="2006" name="J. Bacteriol.">
        <title>Comparative genomic evidence for a close relationship between the dimorphic prosthecate bacteria Hyphomonas neptunium and Caulobacter crescentus.</title>
        <authorList>
            <person name="Badger J.H."/>
            <person name="Hoover T.R."/>
            <person name="Brun Y.V."/>
            <person name="Weiner R.M."/>
            <person name="Laub M.T."/>
            <person name="Alexandre G."/>
            <person name="Mrazek J."/>
            <person name="Ren Q."/>
            <person name="Paulsen I.T."/>
            <person name="Nelson K.E."/>
            <person name="Khouri H.M."/>
            <person name="Radune D."/>
            <person name="Sosa J."/>
            <person name="Dodson R.J."/>
            <person name="Sullivan S.A."/>
            <person name="Rosovitz M.J."/>
            <person name="Madupu R."/>
            <person name="Brinkac L.M."/>
            <person name="Durkin A.S."/>
            <person name="Daugherty S.C."/>
            <person name="Kothari S.P."/>
            <person name="Giglio M.G."/>
            <person name="Zhou L."/>
            <person name="Haft D.H."/>
            <person name="Selengut J.D."/>
            <person name="Davidsen T.M."/>
            <person name="Yang Q."/>
            <person name="Zafar N."/>
            <person name="Ward N.L."/>
        </authorList>
    </citation>
    <scope>NUCLEOTIDE SEQUENCE [LARGE SCALE GENOMIC DNA]</scope>
    <source>
        <strain>ATCC 15444</strain>
    </source>
</reference>
<accession>Q0C441</accession>
<comment type="function">
    <text evidence="1">GTPase that plays an essential role in the late steps of ribosome biogenesis.</text>
</comment>
<comment type="subunit">
    <text evidence="1">Associates with the 50S ribosomal subunit.</text>
</comment>
<comment type="similarity">
    <text evidence="1">Belongs to the TRAFAC class TrmE-Era-EngA-EngB-Septin-like GTPase superfamily. EngA (Der) GTPase family.</text>
</comment>
<feature type="chain" id="PRO_1000011639" description="GTPase Der">
    <location>
        <begin position="1"/>
        <end position="510"/>
    </location>
</feature>
<feature type="domain" description="EngA-type G 1">
    <location>
        <begin position="3"/>
        <end position="167"/>
    </location>
</feature>
<feature type="domain" description="EngA-type G 2">
    <location>
        <begin position="230"/>
        <end position="405"/>
    </location>
</feature>
<feature type="domain" description="KH-like" evidence="1">
    <location>
        <begin position="406"/>
        <end position="490"/>
    </location>
</feature>
<feature type="binding site" evidence="1">
    <location>
        <begin position="9"/>
        <end position="16"/>
    </location>
    <ligand>
        <name>GTP</name>
        <dbReference type="ChEBI" id="CHEBI:37565"/>
        <label>1</label>
    </ligand>
</feature>
<feature type="binding site" evidence="1">
    <location>
        <begin position="56"/>
        <end position="60"/>
    </location>
    <ligand>
        <name>GTP</name>
        <dbReference type="ChEBI" id="CHEBI:37565"/>
        <label>1</label>
    </ligand>
</feature>
<feature type="binding site" evidence="1">
    <location>
        <begin position="119"/>
        <end position="122"/>
    </location>
    <ligand>
        <name>GTP</name>
        <dbReference type="ChEBI" id="CHEBI:37565"/>
        <label>1</label>
    </ligand>
</feature>
<feature type="binding site" evidence="1">
    <location>
        <begin position="236"/>
        <end position="243"/>
    </location>
    <ligand>
        <name>GTP</name>
        <dbReference type="ChEBI" id="CHEBI:37565"/>
        <label>2</label>
    </ligand>
</feature>
<feature type="binding site" evidence="1">
    <location>
        <begin position="283"/>
        <end position="287"/>
    </location>
    <ligand>
        <name>GTP</name>
        <dbReference type="ChEBI" id="CHEBI:37565"/>
        <label>2</label>
    </ligand>
</feature>
<feature type="binding site" evidence="1">
    <location>
        <begin position="348"/>
        <end position="351"/>
    </location>
    <ligand>
        <name>GTP</name>
        <dbReference type="ChEBI" id="CHEBI:37565"/>
        <label>2</label>
    </ligand>
</feature>
<keyword id="KW-0342">GTP-binding</keyword>
<keyword id="KW-0547">Nucleotide-binding</keyword>
<keyword id="KW-1185">Reference proteome</keyword>
<keyword id="KW-0677">Repeat</keyword>
<keyword id="KW-0690">Ribosome biogenesis</keyword>
<evidence type="ECO:0000255" key="1">
    <source>
        <dbReference type="HAMAP-Rule" id="MF_00195"/>
    </source>
</evidence>
<dbReference type="EMBL" id="CP000158">
    <property type="protein sequence ID" value="ABI76593.1"/>
    <property type="molecule type" value="Genomic_DNA"/>
</dbReference>
<dbReference type="RefSeq" id="WP_011645802.1">
    <property type="nucleotide sequence ID" value="NC_008358.1"/>
</dbReference>
<dbReference type="SMR" id="Q0C441"/>
<dbReference type="STRING" id="228405.HNE_0774"/>
<dbReference type="KEGG" id="hne:HNE_0774"/>
<dbReference type="eggNOG" id="COG1160">
    <property type="taxonomic scope" value="Bacteria"/>
</dbReference>
<dbReference type="HOGENOM" id="CLU_016077_5_0_5"/>
<dbReference type="Proteomes" id="UP000001959">
    <property type="component" value="Chromosome"/>
</dbReference>
<dbReference type="GO" id="GO:0005525">
    <property type="term" value="F:GTP binding"/>
    <property type="evidence" value="ECO:0007669"/>
    <property type="project" value="UniProtKB-UniRule"/>
</dbReference>
<dbReference type="GO" id="GO:0042254">
    <property type="term" value="P:ribosome biogenesis"/>
    <property type="evidence" value="ECO:0007669"/>
    <property type="project" value="UniProtKB-KW"/>
</dbReference>
<dbReference type="CDD" id="cd01894">
    <property type="entry name" value="EngA1"/>
    <property type="match status" value="1"/>
</dbReference>
<dbReference type="CDD" id="cd01895">
    <property type="entry name" value="EngA2"/>
    <property type="match status" value="1"/>
</dbReference>
<dbReference type="FunFam" id="3.30.300.20:FF:000004">
    <property type="entry name" value="GTPase Der"/>
    <property type="match status" value="1"/>
</dbReference>
<dbReference type="FunFam" id="3.40.50.300:FF:000057">
    <property type="entry name" value="GTPase Der"/>
    <property type="match status" value="1"/>
</dbReference>
<dbReference type="Gene3D" id="3.30.300.20">
    <property type="match status" value="1"/>
</dbReference>
<dbReference type="Gene3D" id="3.40.50.300">
    <property type="entry name" value="P-loop containing nucleotide triphosphate hydrolases"/>
    <property type="match status" value="2"/>
</dbReference>
<dbReference type="HAMAP" id="MF_00195">
    <property type="entry name" value="GTPase_Der"/>
    <property type="match status" value="1"/>
</dbReference>
<dbReference type="InterPro" id="IPR031166">
    <property type="entry name" value="G_ENGA"/>
</dbReference>
<dbReference type="InterPro" id="IPR006073">
    <property type="entry name" value="GTP-bd"/>
</dbReference>
<dbReference type="InterPro" id="IPR016484">
    <property type="entry name" value="GTPase_Der"/>
</dbReference>
<dbReference type="InterPro" id="IPR032859">
    <property type="entry name" value="KH_dom-like"/>
</dbReference>
<dbReference type="InterPro" id="IPR015946">
    <property type="entry name" value="KH_dom-like_a/b"/>
</dbReference>
<dbReference type="InterPro" id="IPR027417">
    <property type="entry name" value="P-loop_NTPase"/>
</dbReference>
<dbReference type="InterPro" id="IPR005225">
    <property type="entry name" value="Small_GTP-bd"/>
</dbReference>
<dbReference type="NCBIfam" id="TIGR03594">
    <property type="entry name" value="GTPase_EngA"/>
    <property type="match status" value="1"/>
</dbReference>
<dbReference type="NCBIfam" id="TIGR00231">
    <property type="entry name" value="small_GTP"/>
    <property type="match status" value="2"/>
</dbReference>
<dbReference type="PANTHER" id="PTHR43834">
    <property type="entry name" value="GTPASE DER"/>
    <property type="match status" value="1"/>
</dbReference>
<dbReference type="PANTHER" id="PTHR43834:SF6">
    <property type="entry name" value="GTPASE DER"/>
    <property type="match status" value="1"/>
</dbReference>
<dbReference type="Pfam" id="PF14714">
    <property type="entry name" value="KH_dom-like"/>
    <property type="match status" value="1"/>
</dbReference>
<dbReference type="Pfam" id="PF01926">
    <property type="entry name" value="MMR_HSR1"/>
    <property type="match status" value="2"/>
</dbReference>
<dbReference type="PIRSF" id="PIRSF006485">
    <property type="entry name" value="GTP-binding_EngA"/>
    <property type="match status" value="1"/>
</dbReference>
<dbReference type="PRINTS" id="PR00326">
    <property type="entry name" value="GTP1OBG"/>
</dbReference>
<dbReference type="SUPFAM" id="SSF52540">
    <property type="entry name" value="P-loop containing nucleoside triphosphate hydrolases"/>
    <property type="match status" value="2"/>
</dbReference>
<dbReference type="PROSITE" id="PS51712">
    <property type="entry name" value="G_ENGA"/>
    <property type="match status" value="2"/>
</dbReference>
<name>DER_HYPNA</name>
<proteinExistence type="inferred from homology"/>
<gene>
    <name evidence="1" type="primary">der</name>
    <name type="synonym">engA</name>
    <name type="ordered locus">HNE_0774</name>
</gene>
<sequence length="510" mass="56050">MPLKLAIVGRPNVGKSTLFNRLVGKKIALVDDQPGVTRDRKMADGRLASLPLSLIDTAGFDNVNDDSLEARMRAQTEAAIAEADLVLFLVDARVGVTPEDETFAGLLRKANIPVVLAANKAEGRAGEAGVFDAFRLGFGEPVGLSAEHGEGMAELYESIRNALGPEAYERALEEAEPDYERGAGEDILEKLAHIDIEDTTLSDDDLVAAIEAADIDADVAEAPVQSDRPIRLAIVGRPNAGKSTLINQLLQSDRMLTGPEAGITRDSITVNWEWEGRQIRLVDTAGLRRKNKVQERLERMSTAETIRSLKYADIVALVMDAHEAMEKQDLQIADLALREGRGVVLVISKWDTVEDTDGAARHIRDLANRLMPNAGGAPVVFLSGLTGRNIEKLMPAVVKVYKDWTARAKTGDLNRWLRHTVEHHPPPSVQGKRIKPRYMAQMKARPPTFVLIASRGDQMPEGYKRYLVNGIREAFDMHGVPIRLFVRQGKNPYAGKVGADGPPRHKRRNN</sequence>